<reference key="1">
    <citation type="journal article" date="1997" name="Genomics">
        <title>The human extracellular matrix gene 1 (ECM1): genomic structure, cDNA cloning, expression pattern, and chromosomal localization.</title>
        <authorList>
            <person name="Smits P."/>
            <person name="Ni J."/>
            <person name="Feng P."/>
            <person name="Wauters J."/>
            <person name="van Hul W."/>
            <person name="Boutaibi M.E."/>
            <person name="Dillon P.J."/>
            <person name="Merregaert J."/>
        </authorList>
    </citation>
    <scope>NUCLEOTIDE SEQUENCE [GENOMIC DNA / MRNA] (ISOFORMS 1 AND 2)</scope>
    <scope>VARIANT SER-415</scope>
</reference>
<reference key="2">
    <citation type="journal article" date="1997" name="Matrix Biol.">
        <title>Characterization of the human extracellular matrix protein 1 gene on chromosome 1q21.</title>
        <authorList>
            <person name="Johnson M.R."/>
            <person name="Wilkin D.J."/>
            <person name="Vos H.L."/>
            <person name="Ortiz de Luna R.I."/>
            <person name="Dehejia A.M."/>
            <person name="Polymeropoulos M.H."/>
            <person name="Francomano C.A."/>
        </authorList>
    </citation>
    <scope>NUCLEOTIDE SEQUENCE [GENOMIC DNA / MRNA] (ISOFORM 1)</scope>
</reference>
<reference key="3">
    <citation type="journal article" date="2004" name="Nat. Genet.">
        <title>Complete sequencing and characterization of 21,243 full-length human cDNAs.</title>
        <authorList>
            <person name="Ota T."/>
            <person name="Suzuki Y."/>
            <person name="Nishikawa T."/>
            <person name="Otsuki T."/>
            <person name="Sugiyama T."/>
            <person name="Irie R."/>
            <person name="Wakamatsu A."/>
            <person name="Hayashi K."/>
            <person name="Sato H."/>
            <person name="Nagai K."/>
            <person name="Kimura K."/>
            <person name="Makita H."/>
            <person name="Sekine M."/>
            <person name="Obayashi M."/>
            <person name="Nishi T."/>
            <person name="Shibahara T."/>
            <person name="Tanaka T."/>
            <person name="Ishii S."/>
            <person name="Yamamoto J."/>
            <person name="Saito K."/>
            <person name="Kawai Y."/>
            <person name="Isono Y."/>
            <person name="Nakamura Y."/>
            <person name="Nagahari K."/>
            <person name="Murakami K."/>
            <person name="Yasuda T."/>
            <person name="Iwayanagi T."/>
            <person name="Wagatsuma M."/>
            <person name="Shiratori A."/>
            <person name="Sudo H."/>
            <person name="Hosoiri T."/>
            <person name="Kaku Y."/>
            <person name="Kodaira H."/>
            <person name="Kondo H."/>
            <person name="Sugawara M."/>
            <person name="Takahashi M."/>
            <person name="Kanda K."/>
            <person name="Yokoi T."/>
            <person name="Furuya T."/>
            <person name="Kikkawa E."/>
            <person name="Omura Y."/>
            <person name="Abe K."/>
            <person name="Kamihara K."/>
            <person name="Katsuta N."/>
            <person name="Sato K."/>
            <person name="Tanikawa M."/>
            <person name="Yamazaki M."/>
            <person name="Ninomiya K."/>
            <person name="Ishibashi T."/>
            <person name="Yamashita H."/>
            <person name="Murakawa K."/>
            <person name="Fujimori K."/>
            <person name="Tanai H."/>
            <person name="Kimata M."/>
            <person name="Watanabe M."/>
            <person name="Hiraoka S."/>
            <person name="Chiba Y."/>
            <person name="Ishida S."/>
            <person name="Ono Y."/>
            <person name="Takiguchi S."/>
            <person name="Watanabe S."/>
            <person name="Yosida M."/>
            <person name="Hotuta T."/>
            <person name="Kusano J."/>
            <person name="Kanehori K."/>
            <person name="Takahashi-Fujii A."/>
            <person name="Hara H."/>
            <person name="Tanase T.-O."/>
            <person name="Nomura Y."/>
            <person name="Togiya S."/>
            <person name="Komai F."/>
            <person name="Hara R."/>
            <person name="Takeuchi K."/>
            <person name="Arita M."/>
            <person name="Imose N."/>
            <person name="Musashino K."/>
            <person name="Yuuki H."/>
            <person name="Oshima A."/>
            <person name="Sasaki N."/>
            <person name="Aotsuka S."/>
            <person name="Yoshikawa Y."/>
            <person name="Matsunawa H."/>
            <person name="Ichihara T."/>
            <person name="Shiohata N."/>
            <person name="Sano S."/>
            <person name="Moriya S."/>
            <person name="Momiyama H."/>
            <person name="Satoh N."/>
            <person name="Takami S."/>
            <person name="Terashima Y."/>
            <person name="Suzuki O."/>
            <person name="Nakagawa S."/>
            <person name="Senoh A."/>
            <person name="Mizoguchi H."/>
            <person name="Goto Y."/>
            <person name="Shimizu F."/>
            <person name="Wakebe H."/>
            <person name="Hishigaki H."/>
            <person name="Watanabe T."/>
            <person name="Sugiyama A."/>
            <person name="Takemoto M."/>
            <person name="Kawakami B."/>
            <person name="Yamazaki M."/>
            <person name="Watanabe K."/>
            <person name="Kumagai A."/>
            <person name="Itakura S."/>
            <person name="Fukuzumi Y."/>
            <person name="Fujimori Y."/>
            <person name="Komiyama M."/>
            <person name="Tashiro H."/>
            <person name="Tanigami A."/>
            <person name="Fujiwara T."/>
            <person name="Ono T."/>
            <person name="Yamada K."/>
            <person name="Fujii Y."/>
            <person name="Ozaki K."/>
            <person name="Hirao M."/>
            <person name="Ohmori Y."/>
            <person name="Kawabata A."/>
            <person name="Hikiji T."/>
            <person name="Kobatake N."/>
            <person name="Inagaki H."/>
            <person name="Ikema Y."/>
            <person name="Okamoto S."/>
            <person name="Okitani R."/>
            <person name="Kawakami T."/>
            <person name="Noguchi S."/>
            <person name="Itoh T."/>
            <person name="Shigeta K."/>
            <person name="Senba T."/>
            <person name="Matsumura K."/>
            <person name="Nakajima Y."/>
            <person name="Mizuno T."/>
            <person name="Morinaga M."/>
            <person name="Sasaki M."/>
            <person name="Togashi T."/>
            <person name="Oyama M."/>
            <person name="Hata H."/>
            <person name="Watanabe M."/>
            <person name="Komatsu T."/>
            <person name="Mizushima-Sugano J."/>
            <person name="Satoh T."/>
            <person name="Shirai Y."/>
            <person name="Takahashi Y."/>
            <person name="Nakagawa K."/>
            <person name="Okumura K."/>
            <person name="Nagase T."/>
            <person name="Nomura N."/>
            <person name="Kikuchi H."/>
            <person name="Masuho Y."/>
            <person name="Yamashita R."/>
            <person name="Nakai K."/>
            <person name="Yada T."/>
            <person name="Nakamura Y."/>
            <person name="Ohara O."/>
            <person name="Isogai T."/>
            <person name="Sugano S."/>
        </authorList>
    </citation>
    <scope>NUCLEOTIDE SEQUENCE [LARGE SCALE MRNA] (ISOFORMS 1; 3 AND 4)</scope>
    <scope>VARIANTS MET-130 AND SER-415</scope>
    <source>
        <tissue>Synovial cell</tissue>
        <tissue>Testis</tissue>
    </source>
</reference>
<reference key="4">
    <citation type="journal article" date="2006" name="Nature">
        <title>The DNA sequence and biological annotation of human chromosome 1.</title>
        <authorList>
            <person name="Gregory S.G."/>
            <person name="Barlow K.F."/>
            <person name="McLay K.E."/>
            <person name="Kaul R."/>
            <person name="Swarbreck D."/>
            <person name="Dunham A."/>
            <person name="Scott C.E."/>
            <person name="Howe K.L."/>
            <person name="Woodfine K."/>
            <person name="Spencer C.C.A."/>
            <person name="Jones M.C."/>
            <person name="Gillson C."/>
            <person name="Searle S."/>
            <person name="Zhou Y."/>
            <person name="Kokocinski F."/>
            <person name="McDonald L."/>
            <person name="Evans R."/>
            <person name="Phillips K."/>
            <person name="Atkinson A."/>
            <person name="Cooper R."/>
            <person name="Jones C."/>
            <person name="Hall R.E."/>
            <person name="Andrews T.D."/>
            <person name="Lloyd C."/>
            <person name="Ainscough R."/>
            <person name="Almeida J.P."/>
            <person name="Ambrose K.D."/>
            <person name="Anderson F."/>
            <person name="Andrew R.W."/>
            <person name="Ashwell R.I.S."/>
            <person name="Aubin K."/>
            <person name="Babbage A.K."/>
            <person name="Bagguley C.L."/>
            <person name="Bailey J."/>
            <person name="Beasley H."/>
            <person name="Bethel G."/>
            <person name="Bird C.P."/>
            <person name="Bray-Allen S."/>
            <person name="Brown J.Y."/>
            <person name="Brown A.J."/>
            <person name="Buckley D."/>
            <person name="Burton J."/>
            <person name="Bye J."/>
            <person name="Carder C."/>
            <person name="Chapman J.C."/>
            <person name="Clark S.Y."/>
            <person name="Clarke G."/>
            <person name="Clee C."/>
            <person name="Cobley V."/>
            <person name="Collier R.E."/>
            <person name="Corby N."/>
            <person name="Coville G.J."/>
            <person name="Davies J."/>
            <person name="Deadman R."/>
            <person name="Dunn M."/>
            <person name="Earthrowl M."/>
            <person name="Ellington A.G."/>
            <person name="Errington H."/>
            <person name="Frankish A."/>
            <person name="Frankland J."/>
            <person name="French L."/>
            <person name="Garner P."/>
            <person name="Garnett J."/>
            <person name="Gay L."/>
            <person name="Ghori M.R.J."/>
            <person name="Gibson R."/>
            <person name="Gilby L.M."/>
            <person name="Gillett W."/>
            <person name="Glithero R.J."/>
            <person name="Grafham D.V."/>
            <person name="Griffiths C."/>
            <person name="Griffiths-Jones S."/>
            <person name="Grocock R."/>
            <person name="Hammond S."/>
            <person name="Harrison E.S.I."/>
            <person name="Hart E."/>
            <person name="Haugen E."/>
            <person name="Heath P.D."/>
            <person name="Holmes S."/>
            <person name="Holt K."/>
            <person name="Howden P.J."/>
            <person name="Hunt A.R."/>
            <person name="Hunt S.E."/>
            <person name="Hunter G."/>
            <person name="Isherwood J."/>
            <person name="James R."/>
            <person name="Johnson C."/>
            <person name="Johnson D."/>
            <person name="Joy A."/>
            <person name="Kay M."/>
            <person name="Kershaw J.K."/>
            <person name="Kibukawa M."/>
            <person name="Kimberley A.M."/>
            <person name="King A."/>
            <person name="Knights A.J."/>
            <person name="Lad H."/>
            <person name="Laird G."/>
            <person name="Lawlor S."/>
            <person name="Leongamornlert D.A."/>
            <person name="Lloyd D.M."/>
            <person name="Loveland J."/>
            <person name="Lovell J."/>
            <person name="Lush M.J."/>
            <person name="Lyne R."/>
            <person name="Martin S."/>
            <person name="Mashreghi-Mohammadi M."/>
            <person name="Matthews L."/>
            <person name="Matthews N.S.W."/>
            <person name="McLaren S."/>
            <person name="Milne S."/>
            <person name="Mistry S."/>
            <person name="Moore M.J.F."/>
            <person name="Nickerson T."/>
            <person name="O'Dell C.N."/>
            <person name="Oliver K."/>
            <person name="Palmeiri A."/>
            <person name="Palmer S.A."/>
            <person name="Parker A."/>
            <person name="Patel D."/>
            <person name="Pearce A.V."/>
            <person name="Peck A.I."/>
            <person name="Pelan S."/>
            <person name="Phelps K."/>
            <person name="Phillimore B.J."/>
            <person name="Plumb R."/>
            <person name="Rajan J."/>
            <person name="Raymond C."/>
            <person name="Rouse G."/>
            <person name="Saenphimmachak C."/>
            <person name="Sehra H.K."/>
            <person name="Sheridan E."/>
            <person name="Shownkeen R."/>
            <person name="Sims S."/>
            <person name="Skuce C.D."/>
            <person name="Smith M."/>
            <person name="Steward C."/>
            <person name="Subramanian S."/>
            <person name="Sycamore N."/>
            <person name="Tracey A."/>
            <person name="Tromans A."/>
            <person name="Van Helmond Z."/>
            <person name="Wall M."/>
            <person name="Wallis J.M."/>
            <person name="White S."/>
            <person name="Whitehead S.L."/>
            <person name="Wilkinson J.E."/>
            <person name="Willey D.L."/>
            <person name="Williams H."/>
            <person name="Wilming L."/>
            <person name="Wray P.W."/>
            <person name="Wu Z."/>
            <person name="Coulson A."/>
            <person name="Vaudin M."/>
            <person name="Sulston J.E."/>
            <person name="Durbin R.M."/>
            <person name="Hubbard T."/>
            <person name="Wooster R."/>
            <person name="Dunham I."/>
            <person name="Carter N.P."/>
            <person name="McVean G."/>
            <person name="Ross M.T."/>
            <person name="Harrow J."/>
            <person name="Olson M.V."/>
            <person name="Beck S."/>
            <person name="Rogers J."/>
            <person name="Bentley D.R."/>
        </authorList>
    </citation>
    <scope>NUCLEOTIDE SEQUENCE [LARGE SCALE GENOMIC DNA]</scope>
</reference>
<reference key="5">
    <citation type="submission" date="2005-09" db="EMBL/GenBank/DDBJ databases">
        <authorList>
            <person name="Mural R.J."/>
            <person name="Istrail S."/>
            <person name="Sutton G.G."/>
            <person name="Florea L."/>
            <person name="Halpern A.L."/>
            <person name="Mobarry C.M."/>
            <person name="Lippert R."/>
            <person name="Walenz B."/>
            <person name="Shatkay H."/>
            <person name="Dew I."/>
            <person name="Miller J.R."/>
            <person name="Flanigan M.J."/>
            <person name="Edwards N.J."/>
            <person name="Bolanos R."/>
            <person name="Fasulo D."/>
            <person name="Halldorsson B.V."/>
            <person name="Hannenhalli S."/>
            <person name="Turner R."/>
            <person name="Yooseph S."/>
            <person name="Lu F."/>
            <person name="Nusskern D.R."/>
            <person name="Shue B.C."/>
            <person name="Zheng X.H."/>
            <person name="Zhong F."/>
            <person name="Delcher A.L."/>
            <person name="Huson D.H."/>
            <person name="Kravitz S.A."/>
            <person name="Mouchard L."/>
            <person name="Reinert K."/>
            <person name="Remington K.A."/>
            <person name="Clark A.G."/>
            <person name="Waterman M.S."/>
            <person name="Eichler E.E."/>
            <person name="Adams M.D."/>
            <person name="Hunkapiller M.W."/>
            <person name="Myers E.W."/>
            <person name="Venter J.C."/>
        </authorList>
    </citation>
    <scope>NUCLEOTIDE SEQUENCE [LARGE SCALE GENOMIC DNA]</scope>
</reference>
<reference key="6">
    <citation type="journal article" date="2004" name="Genome Res.">
        <title>The status, quality, and expansion of the NIH full-length cDNA project: the Mammalian Gene Collection (MGC).</title>
        <authorList>
            <consortium name="The MGC Project Team"/>
        </authorList>
    </citation>
    <scope>NUCLEOTIDE SEQUENCE [LARGE SCALE MRNA] (ISOFORM 1)</scope>
    <scope>VARIANTS MET-130 AND SER-415</scope>
    <source>
        <tissue>Skin</tissue>
    </source>
</reference>
<reference key="7">
    <citation type="journal article" date="2001" name="Bone">
        <title>Recombinant human extracellular matrix protein 1 inhibits alkaline phosphatase activity and mineralization of mouse embryonic metatarsals in vitro.</title>
        <authorList>
            <person name="Deckers M.M.L."/>
            <person name="Smits P."/>
            <person name="Karperien M."/>
            <person name="Ni J."/>
            <person name="Tylzanowski P."/>
            <person name="Feng P."/>
            <person name="Parmelee D."/>
            <person name="Zhang J."/>
            <person name="Bouffard E."/>
            <person name="Gentz R."/>
            <person name="Loewik C.W.G.M."/>
            <person name="Merregaert J."/>
        </authorList>
    </citation>
    <scope>FUNCTION IN BONE FORMATION</scope>
</reference>
<reference key="8">
    <citation type="journal article" date="2001" name="FASEB J.">
        <title>Extracellular matrix protein 1 (ECM1) has angiogenic properties and is expressed by breast tumor cells.</title>
        <authorList>
            <person name="Han Z."/>
            <person name="Ni J."/>
            <person name="Smits P."/>
            <person name="Underhill C.B."/>
            <person name="Xie B."/>
            <person name="Chen Y."/>
            <person name="Liu N."/>
            <person name="Tylzanowski P."/>
            <person name="Parmelee D."/>
            <person name="Feng P."/>
            <person name="Ding I."/>
            <person name="Gao F."/>
            <person name="Gentz R."/>
            <person name="Huylebroeck D."/>
            <person name="Merregaert J."/>
            <person name="Zhang L."/>
        </authorList>
    </citation>
    <scope>FUNCTION IN ANGIOGENESIS</scope>
    <scope>TISSUE SPECIFICITY</scope>
</reference>
<reference key="9">
    <citation type="journal article" date="2002" name="Hum. Mol. Genet.">
        <title>Lipoid proteinosis maps to 1q21 and is caused by mutations in the extracellular matrix protein 1 gene (ECM1).</title>
        <authorList>
            <person name="Hamada T."/>
            <person name="McLean W.H.I."/>
            <person name="Ramsay M."/>
            <person name="Ashton G.H.S."/>
            <person name="Nanda A."/>
            <person name="Jenkins T."/>
            <person name="Edelstein I."/>
            <person name="South A.P."/>
            <person name="Bleck O."/>
            <person name="Wessagowit V."/>
            <person name="Mallipeddi R."/>
            <person name="Orchard G.E."/>
            <person name="Wan H."/>
            <person name="Dopping-Hepenstal P.J.C."/>
            <person name="Mellerio J.E."/>
            <person name="Whittock N.V."/>
            <person name="Munro C.S."/>
            <person name="van Steensel M.A.M."/>
            <person name="Steijlen P.M."/>
            <person name="Ni J."/>
            <person name="Zhang L."/>
            <person name="Hashimoto T."/>
            <person name="Eady R.A.E."/>
            <person name="McGrath J.A."/>
        </authorList>
    </citation>
    <scope>INVOLVEMENT IN LIPOID PROTEINOSIS</scope>
</reference>
<reference key="10">
    <citation type="journal article" date="2003" name="J. Biol. Chem.">
        <title>Perlecan protein core interacts with extracellular matrix protein 1 (ECM1), a glycoprotein involved in bone formation and angiogenesis.</title>
        <authorList>
            <person name="Mongiat M."/>
            <person name="Fu J."/>
            <person name="Oldershaw R."/>
            <person name="Greenhalgh R."/>
            <person name="Gown A.M."/>
            <person name="Iozzo R.V."/>
        </authorList>
    </citation>
    <scope>INTERACTION WITH HSPG2</scope>
    <scope>TISSUE SPECIFICITY</scope>
</reference>
<reference key="11">
    <citation type="journal article" date="2005" name="J. Proteome Res.">
        <title>Human plasma N-glycoproteome analysis by immunoaffinity subtraction, hydrazide chemistry, and mass spectrometry.</title>
        <authorList>
            <person name="Liu T."/>
            <person name="Qian W.-J."/>
            <person name="Gritsenko M.A."/>
            <person name="Camp D.G. II"/>
            <person name="Monroe M.E."/>
            <person name="Moore R.J."/>
            <person name="Smith R.D."/>
        </authorList>
    </citation>
    <scope>GLYCOSYLATION [LARGE SCALE ANALYSIS] AT ASN-444</scope>
    <source>
        <tissue>Plasma</tissue>
    </source>
</reference>
<reference key="12">
    <citation type="journal article" date="2006" name="Exp. Dermatol.">
        <title>Extracellular matrix protein 1 inhibits the activity of matrix metalloproteinase 9 through high-affinity protein/protein interactions.</title>
        <authorList>
            <person name="Fujimoto N."/>
            <person name="Terlizzi J."/>
            <person name="Aho S."/>
            <person name="Brittingham R."/>
            <person name="Fertala A."/>
            <person name="Oyama N."/>
            <person name="McGrath J.A."/>
            <person name="Uitto J."/>
        </authorList>
    </citation>
    <scope>INTERACTION WITH MMP9</scope>
    <scope>FUNCTION</scope>
</reference>
<reference key="13">
    <citation type="journal article" date="2009" name="Matrix Biol.">
        <title>ECM1 interacts with fibulin-3 and the beta 3 chain of laminin 332 through its serum albumin subdomain-like 2 domain.</title>
        <authorList>
            <person name="Sercu S."/>
            <person name="Lambeir A.M."/>
            <person name="Steenackers E."/>
            <person name="El Ghalbzouri A."/>
            <person name="Geentjens K."/>
            <person name="Sasaki T."/>
            <person name="Oyama N."/>
            <person name="Merregaert J."/>
        </authorList>
    </citation>
    <scope>INTERACTION WITH EFEMP1 AND LAMB3</scope>
</reference>
<reference key="14">
    <citation type="journal article" date="2009" name="Mol. Cell. Proteomics">
        <title>A strategy for precise and large scale identification of core fucosylated glycoproteins.</title>
        <authorList>
            <person name="Jia W."/>
            <person name="Lu Z."/>
            <person name="Fu Y."/>
            <person name="Wang H.P."/>
            <person name="Wang L.H."/>
            <person name="Chi H."/>
            <person name="Yuan Z.F."/>
            <person name="Zheng Z.B."/>
            <person name="Song L.N."/>
            <person name="Han H.H."/>
            <person name="Liang Y.M."/>
            <person name="Wang J.L."/>
            <person name="Cai Y."/>
            <person name="Zhang Y.K."/>
            <person name="Deng Y.L."/>
            <person name="Ying W.T."/>
            <person name="He S.M."/>
            <person name="Qian X.H."/>
        </authorList>
    </citation>
    <scope>GLYCOSYLATION AT ASN-444</scope>
</reference>
<reference key="15">
    <citation type="journal article" date="2014" name="J. Proteomics">
        <title>An enzyme assisted RP-RPLC approach for in-depth analysis of human liver phosphoproteome.</title>
        <authorList>
            <person name="Bian Y."/>
            <person name="Song C."/>
            <person name="Cheng K."/>
            <person name="Dong M."/>
            <person name="Wang F."/>
            <person name="Huang J."/>
            <person name="Sun D."/>
            <person name="Wang L."/>
            <person name="Ye M."/>
            <person name="Zou H."/>
        </authorList>
    </citation>
    <scope>IDENTIFICATION BY MASS SPECTROMETRY [LARGE SCALE ANALYSIS]</scope>
    <source>
        <tissue>Liver</tissue>
    </source>
</reference>
<reference key="16">
    <citation type="journal article" date="2003" name="J. Invest. Dermatol.">
        <title>Extracellular matrix protein 1 gene (ECM1) mutations in lipoid proteinosis and genotype-phenotype correlation.</title>
        <authorList>
            <person name="Hamada T."/>
            <person name="Wessagowit V."/>
            <person name="South A.P."/>
            <person name="Ashton G.H.S."/>
            <person name="Chan I."/>
            <person name="Oyama N."/>
            <person name="Siriwattana A."/>
            <person name="Jewhasuchin P."/>
            <person name="Charuwichitratana S."/>
            <person name="Thappa D.M."/>
            <person name="Lenane P."/>
            <person name="Krafchik B."/>
            <person name="Kulthanan K."/>
            <person name="Shimizu H."/>
            <person name="Kaya T.I."/>
            <person name="Erdal M.E."/>
            <person name="Paradisi M."/>
            <person name="Paller A.S."/>
            <person name="Seishima M."/>
            <person name="Hashimoto T."/>
            <person name="McGrath J.A."/>
        </authorList>
    </citation>
    <scope>VARIANT LIP ILE-167</scope>
    <scope>VARIANTS MET-130 AND SER-415</scope>
</reference>
<name>ECM1_HUMAN</name>
<sequence length="540" mass="60674">MGTTARAALVLTYLAVASAASEGGFTATGQRQLRPEHFQEVGYAAPPSPPLSRSLPMDHPDSSQHGPPFEGQSQVQPPPSQEATPLQQEKLLPAQLPAEKEVGPPLPQEAVPLQKELPSLQHPNEQKEGTPAPFGDQSHPEPESWNAAQHCQQDRSQGGWGHRLDGFPPGRPSPDNLNQICLPNRQHVVYGPWNLPQSSYSHLTRQGETLNFLEIGYSRCCHCRSHTNRLECAKLVWEEAMSRFCEAEFSVKTRPHWCCTRQGEARFSCFQEEAPQPHYQLRACPSHQPDISSGLELPFPPGVPTLDNIKNICHLRRFRSVPRNLPATDPLQRELLALIQLEREFQRCCRQGNNHTCTWKAWEDTLDKYCDREYAVKTHHHLCCRHPPSPTRDECFARRAPYPNYDRDILTIDIGRVTPNLMGHLCGNQRVLTKHKHIPGLIHNMTARCCDLPFPEQACCAEEEKLTFINDLCGPRRNIWRDPALCCYLSPGDEQVNCFNINYLRNVALVSGDTENAKGQGEQGSTGGTNISSTSEPKEE</sequence>
<accession>Q16610</accession>
<accession>A8K8S0</accession>
<accession>B4DW49</accession>
<accession>B4DY60</accession>
<accession>O43266</accession>
<accession>Q5T5G4</accession>
<accession>Q5T5G5</accession>
<accession>Q5T5G6</accession>
<accession>Q8IZ60</accession>
<proteinExistence type="evidence at protein level"/>
<protein>
    <recommendedName>
        <fullName>Extracellular matrix protein 1</fullName>
    </recommendedName>
    <alternativeName>
        <fullName>Secretory component p85</fullName>
    </alternativeName>
</protein>
<feature type="signal peptide" evidence="1">
    <location>
        <begin position="1"/>
        <end position="19"/>
    </location>
</feature>
<feature type="chain" id="PRO_0000021146" description="Extracellular matrix protein 1">
    <location>
        <begin position="20"/>
        <end position="540"/>
    </location>
</feature>
<feature type="repeat" description="1">
    <location>
        <begin position="150"/>
        <end position="279"/>
    </location>
</feature>
<feature type="repeat" description="2">
    <location>
        <begin position="283"/>
        <end position="405"/>
    </location>
</feature>
<feature type="region of interest" description="Disordered" evidence="3">
    <location>
        <begin position="41"/>
        <end position="85"/>
    </location>
</feature>
<feature type="region of interest" description="Disordered" evidence="3">
    <location>
        <begin position="120"/>
        <end position="175"/>
    </location>
</feature>
<feature type="region of interest" description="2 X approximate repeats">
    <location>
        <begin position="150"/>
        <end position="405"/>
    </location>
</feature>
<feature type="region of interest" description="Disordered" evidence="3">
    <location>
        <begin position="515"/>
        <end position="540"/>
    </location>
</feature>
<feature type="compositionally biased region" description="Polar residues" evidence="3">
    <location>
        <begin position="71"/>
        <end position="85"/>
    </location>
</feature>
<feature type="compositionally biased region" description="Polar residues" evidence="3">
    <location>
        <begin position="146"/>
        <end position="156"/>
    </location>
</feature>
<feature type="compositionally biased region" description="Low complexity" evidence="3">
    <location>
        <begin position="528"/>
        <end position="540"/>
    </location>
</feature>
<feature type="glycosylation site" description="N-linked (GlcNAc...) asparagine" evidence="2">
    <location>
        <position position="354"/>
    </location>
</feature>
<feature type="glycosylation site" description="N-linked (GlcNAc...) (complex) asparagine" evidence="11 13">
    <location>
        <position position="444"/>
    </location>
</feature>
<feature type="glycosylation site" description="N-linked (GlcNAc...) asparagine" evidence="2">
    <location>
        <position position="530"/>
    </location>
</feature>
<feature type="splice variant" id="VSP_036411" description="In isoform 3." evidence="16">
    <location>
        <begin position="1"/>
        <end position="71"/>
    </location>
</feature>
<feature type="splice variant" id="VSP_036412" description="In isoform 3." evidence="16">
    <original>QSQVQPPPSQ</original>
    <variation>MALPLRDRVK</variation>
    <location>
        <begin position="72"/>
        <end position="81"/>
    </location>
</feature>
<feature type="splice variant" id="VSP_036413" description="In isoform 4." evidence="16">
    <original>Q</original>
    <variation>GKEGRGPRPHSQPWLGERVGCSHIPPSI</variation>
    <location>
        <position position="74"/>
    </location>
</feature>
<feature type="splice variant" id="VSP_036414" description="In isoform 2." evidence="17">
    <location>
        <begin position="237"/>
        <end position="361"/>
    </location>
</feature>
<feature type="splice variant" id="VSP_036415" description="In isoform 3." evidence="16">
    <original>WEEAM</original>
    <variation>VRLGS</variation>
    <location>
        <begin position="237"/>
        <end position="241"/>
    </location>
</feature>
<feature type="splice variant" id="VSP_036416" description="In isoform 3." evidence="16">
    <location>
        <begin position="242"/>
        <end position="540"/>
    </location>
</feature>
<feature type="sequence variant" id="VAR_018690" description="In dbSNP:rs3737240." evidence="7 9 10">
    <original>T</original>
    <variation>M</variation>
    <location>
        <position position="130"/>
    </location>
</feature>
<feature type="sequence variant" id="VAR_018691" description="In LiP; dbSNP:rs121909116." evidence="7">
    <original>F</original>
    <variation>I</variation>
    <location>
        <position position="167"/>
    </location>
</feature>
<feature type="sequence variant" id="VAR_014761" description="In dbSNP:rs13294." evidence="7 9 10 15">
    <original>G</original>
    <variation>S</variation>
    <location>
        <position position="415"/>
    </location>
</feature>
<feature type="sequence variant" id="VAR_014762" description="In dbSNP:rs1050901.">
    <original>G</original>
    <variation>R</variation>
    <location>
        <position position="528"/>
    </location>
</feature>
<feature type="sequence variant" id="VAR_014763" description="In dbSNP:rs1050904.">
    <original>S</original>
    <variation>F</variation>
    <location>
        <position position="535"/>
    </location>
</feature>
<feature type="sequence conflict" description="In Ref. 3; BAG63622." evidence="18" ref="3">
    <location>
        <begin position="78"/>
        <end position="84"/>
    </location>
</feature>
<feature type="sequence conflict" description="In Ref. 3; BAF85124." evidence="18" ref="3">
    <original>Q</original>
    <variation>R</variation>
    <location>
        <position position="520"/>
    </location>
</feature>
<organism>
    <name type="scientific">Homo sapiens</name>
    <name type="common">Human</name>
    <dbReference type="NCBI Taxonomy" id="9606"/>
    <lineage>
        <taxon>Eukaryota</taxon>
        <taxon>Metazoa</taxon>
        <taxon>Chordata</taxon>
        <taxon>Craniata</taxon>
        <taxon>Vertebrata</taxon>
        <taxon>Euteleostomi</taxon>
        <taxon>Mammalia</taxon>
        <taxon>Eutheria</taxon>
        <taxon>Euarchontoglires</taxon>
        <taxon>Primates</taxon>
        <taxon>Haplorrhini</taxon>
        <taxon>Catarrhini</taxon>
        <taxon>Hominidae</taxon>
        <taxon>Homo</taxon>
    </lineage>
</organism>
<keyword id="KW-0025">Alternative splicing</keyword>
<keyword id="KW-0037">Angiogenesis</keyword>
<keyword id="KW-0091">Biomineralization</keyword>
<keyword id="KW-0225">Disease variant</keyword>
<keyword id="KW-0272">Extracellular matrix</keyword>
<keyword id="KW-0325">Glycoprotein</keyword>
<keyword id="KW-0495">Mineral balance</keyword>
<keyword id="KW-0892">Osteogenesis</keyword>
<keyword id="KW-1267">Proteomics identification</keyword>
<keyword id="KW-1185">Reference proteome</keyword>
<keyword id="KW-0677">Repeat</keyword>
<keyword id="KW-0964">Secreted</keyword>
<keyword id="KW-0732">Signal</keyword>
<evidence type="ECO:0000250" key="1">
    <source>
        <dbReference type="UniProtKB" id="Q62894"/>
    </source>
</evidence>
<evidence type="ECO:0000255" key="2"/>
<evidence type="ECO:0000256" key="3">
    <source>
        <dbReference type="SAM" id="MobiDB-lite"/>
    </source>
</evidence>
<evidence type="ECO:0000269" key="4">
    <source>
    </source>
</evidence>
<evidence type="ECO:0000269" key="5">
    <source>
    </source>
</evidence>
<evidence type="ECO:0000269" key="6">
    <source>
    </source>
</evidence>
<evidence type="ECO:0000269" key="7">
    <source>
    </source>
</evidence>
<evidence type="ECO:0000269" key="8">
    <source>
    </source>
</evidence>
<evidence type="ECO:0000269" key="9">
    <source>
    </source>
</evidence>
<evidence type="ECO:0000269" key="10">
    <source>
    </source>
</evidence>
<evidence type="ECO:0000269" key="11">
    <source>
    </source>
</evidence>
<evidence type="ECO:0000269" key="12">
    <source>
    </source>
</evidence>
<evidence type="ECO:0000269" key="13">
    <source>
    </source>
</evidence>
<evidence type="ECO:0000269" key="14">
    <source>
    </source>
</evidence>
<evidence type="ECO:0000269" key="15">
    <source>
    </source>
</evidence>
<evidence type="ECO:0000303" key="16">
    <source>
    </source>
</evidence>
<evidence type="ECO:0000303" key="17">
    <source>
    </source>
</evidence>
<evidence type="ECO:0000305" key="18"/>
<gene>
    <name type="primary">ECM1</name>
</gene>
<dbReference type="EMBL" id="U68186">
    <property type="protein sequence ID" value="AAB88081.1"/>
    <property type="molecule type" value="mRNA"/>
</dbReference>
<dbReference type="EMBL" id="U68187">
    <property type="protein sequence ID" value="AAB88082.1"/>
    <property type="molecule type" value="mRNA"/>
</dbReference>
<dbReference type="EMBL" id="U65932">
    <property type="protein sequence ID" value="AAB05933.1"/>
    <property type="molecule type" value="mRNA"/>
</dbReference>
<dbReference type="EMBL" id="U65938">
    <property type="protein sequence ID" value="AAB05934.1"/>
    <property type="molecule type" value="Genomic_DNA"/>
</dbReference>
<dbReference type="EMBL" id="U65933">
    <property type="protein sequence ID" value="AAB05934.1"/>
    <property type="status" value="JOINED"/>
    <property type="molecule type" value="Genomic_DNA"/>
</dbReference>
<dbReference type="EMBL" id="U65934">
    <property type="protein sequence ID" value="AAB05934.1"/>
    <property type="status" value="JOINED"/>
    <property type="molecule type" value="Genomic_DNA"/>
</dbReference>
<dbReference type="EMBL" id="U65935">
    <property type="protein sequence ID" value="AAB05934.1"/>
    <property type="status" value="JOINED"/>
    <property type="molecule type" value="Genomic_DNA"/>
</dbReference>
<dbReference type="EMBL" id="U65936">
    <property type="protein sequence ID" value="AAB05934.1"/>
    <property type="status" value="JOINED"/>
    <property type="molecule type" value="Genomic_DNA"/>
</dbReference>
<dbReference type="EMBL" id="U65937">
    <property type="protein sequence ID" value="AAB05934.1"/>
    <property type="status" value="JOINED"/>
    <property type="molecule type" value="Genomic_DNA"/>
</dbReference>
<dbReference type="EMBL" id="AK097046">
    <property type="protein sequence ID" value="BAG53412.1"/>
    <property type="molecule type" value="mRNA"/>
</dbReference>
<dbReference type="EMBL" id="AK292435">
    <property type="protein sequence ID" value="BAF85124.1"/>
    <property type="molecule type" value="mRNA"/>
</dbReference>
<dbReference type="EMBL" id="AK301369">
    <property type="protein sequence ID" value="BAG62911.1"/>
    <property type="molecule type" value="mRNA"/>
</dbReference>
<dbReference type="EMBL" id="AK302279">
    <property type="protein sequence ID" value="BAG63622.1"/>
    <property type="molecule type" value="mRNA"/>
</dbReference>
<dbReference type="EMBL" id="AL356356">
    <property type="status" value="NOT_ANNOTATED_CDS"/>
    <property type="molecule type" value="Genomic_DNA"/>
</dbReference>
<dbReference type="EMBL" id="CH471121">
    <property type="protein sequence ID" value="EAW53544.1"/>
    <property type="molecule type" value="Genomic_DNA"/>
</dbReference>
<dbReference type="EMBL" id="CH471121">
    <property type="protein sequence ID" value="EAW53545.1"/>
    <property type="molecule type" value="Genomic_DNA"/>
</dbReference>
<dbReference type="EMBL" id="CH471121">
    <property type="protein sequence ID" value="EAW53546.1"/>
    <property type="molecule type" value="Genomic_DNA"/>
</dbReference>
<dbReference type="EMBL" id="BC023505">
    <property type="protein sequence ID" value="AAH23505.1"/>
    <property type="molecule type" value="mRNA"/>
</dbReference>
<dbReference type="CCDS" id="CCDS55632.1">
    <molecule id="Q16610-4"/>
</dbReference>
<dbReference type="CCDS" id="CCDS953.1">
    <molecule id="Q16610-1"/>
</dbReference>
<dbReference type="CCDS" id="CCDS954.1">
    <molecule id="Q16610-2"/>
</dbReference>
<dbReference type="RefSeq" id="NP_001189787.1">
    <molecule id="Q16610-4"/>
    <property type="nucleotide sequence ID" value="NM_001202858.2"/>
</dbReference>
<dbReference type="RefSeq" id="NP_004416.2">
    <molecule id="Q16610-1"/>
    <property type="nucleotide sequence ID" value="NM_004425.4"/>
</dbReference>
<dbReference type="RefSeq" id="NP_073155.2">
    <molecule id="Q16610-2"/>
    <property type="nucleotide sequence ID" value="NM_022664.3"/>
</dbReference>
<dbReference type="BioGRID" id="108222">
    <property type="interactions" value="177"/>
</dbReference>
<dbReference type="FunCoup" id="Q16610">
    <property type="interactions" value="327"/>
</dbReference>
<dbReference type="IntAct" id="Q16610">
    <property type="interactions" value="109"/>
</dbReference>
<dbReference type="MINT" id="Q16610"/>
<dbReference type="STRING" id="9606.ENSP00000358045"/>
<dbReference type="GlyConnect" id="1228">
    <property type="glycosylation" value="20 N-Linked glycans (4 sites), 1 O-Linked glycan (1 site)"/>
</dbReference>
<dbReference type="GlyCosmos" id="Q16610">
    <property type="glycosylation" value="10 sites, 24 glycans"/>
</dbReference>
<dbReference type="GlyGen" id="Q16610">
    <property type="glycosylation" value="19 sites, 43 N-linked glycans (4 sites), 5 O-linked glycans (13 sites)"/>
</dbReference>
<dbReference type="iPTMnet" id="Q16610"/>
<dbReference type="PhosphoSitePlus" id="Q16610"/>
<dbReference type="BioMuta" id="ECM1"/>
<dbReference type="DMDM" id="48429255"/>
<dbReference type="jPOST" id="Q16610"/>
<dbReference type="MassIVE" id="Q16610"/>
<dbReference type="PaxDb" id="9606-ENSP00000358045"/>
<dbReference type="PeptideAtlas" id="Q16610"/>
<dbReference type="PRIDE" id="Q16610"/>
<dbReference type="ProteomicsDB" id="60944">
    <molecule id="Q16610-1"/>
</dbReference>
<dbReference type="ProteomicsDB" id="60945">
    <molecule id="Q16610-2"/>
</dbReference>
<dbReference type="ProteomicsDB" id="60946">
    <molecule id="Q16610-3"/>
</dbReference>
<dbReference type="ProteomicsDB" id="60947">
    <molecule id="Q16610-4"/>
</dbReference>
<dbReference type="Pumba" id="Q16610"/>
<dbReference type="Antibodypedia" id="20285">
    <property type="antibodies" value="519 antibodies from 36 providers"/>
</dbReference>
<dbReference type="DNASU" id="1893"/>
<dbReference type="Ensembl" id="ENST00000346569.6">
    <molecule id="Q16610-2"/>
    <property type="protein sequence ID" value="ENSP00000271630.6"/>
    <property type="gene ID" value="ENSG00000143369.15"/>
</dbReference>
<dbReference type="Ensembl" id="ENST00000369047.9">
    <molecule id="Q16610-1"/>
    <property type="protein sequence ID" value="ENSP00000358043.4"/>
    <property type="gene ID" value="ENSG00000143369.15"/>
</dbReference>
<dbReference type="Ensembl" id="ENST00000369049.8">
    <molecule id="Q16610-4"/>
    <property type="protein sequence ID" value="ENSP00000358045.4"/>
    <property type="gene ID" value="ENSG00000143369.15"/>
</dbReference>
<dbReference type="GeneID" id="1893"/>
<dbReference type="KEGG" id="hsa:1893"/>
<dbReference type="MANE-Select" id="ENST00000369047.9">
    <property type="protein sequence ID" value="ENSP00000358043.4"/>
    <property type="RefSeq nucleotide sequence ID" value="NM_004425.4"/>
    <property type="RefSeq protein sequence ID" value="NP_004416.2"/>
</dbReference>
<dbReference type="UCSC" id="uc001eus.4">
    <molecule id="Q16610-1"/>
    <property type="organism name" value="human"/>
</dbReference>
<dbReference type="AGR" id="HGNC:3153"/>
<dbReference type="CTD" id="1893"/>
<dbReference type="DisGeNET" id="1893"/>
<dbReference type="GeneCards" id="ECM1"/>
<dbReference type="GeneReviews" id="ECM1"/>
<dbReference type="HGNC" id="HGNC:3153">
    <property type="gene designation" value="ECM1"/>
</dbReference>
<dbReference type="HPA" id="ENSG00000143369">
    <property type="expression patterns" value="Tissue enhanced (epididymis, esophagus)"/>
</dbReference>
<dbReference type="MalaCards" id="ECM1"/>
<dbReference type="MIM" id="247100">
    <property type="type" value="phenotype"/>
</dbReference>
<dbReference type="MIM" id="602201">
    <property type="type" value="gene"/>
</dbReference>
<dbReference type="neXtProt" id="NX_Q16610"/>
<dbReference type="OpenTargets" id="ENSG00000143369"/>
<dbReference type="Orphanet" id="530">
    <property type="disease" value="Lipoid proteinosis"/>
</dbReference>
<dbReference type="PharmGKB" id="PA27598"/>
<dbReference type="VEuPathDB" id="HostDB:ENSG00000143369"/>
<dbReference type="eggNOG" id="ENOG502RY3T">
    <property type="taxonomic scope" value="Eukaryota"/>
</dbReference>
<dbReference type="GeneTree" id="ENSGT00390000006215"/>
<dbReference type="HOGENOM" id="CLU_038587_0_0_1"/>
<dbReference type="InParanoid" id="Q16610"/>
<dbReference type="OMA" id="CCRCRSH"/>
<dbReference type="OrthoDB" id="9889855at2759"/>
<dbReference type="PAN-GO" id="Q16610">
    <property type="GO annotations" value="3 GO annotations based on evolutionary models"/>
</dbReference>
<dbReference type="PhylomeDB" id="Q16610"/>
<dbReference type="TreeFam" id="TF330786"/>
<dbReference type="PathwayCommons" id="Q16610"/>
<dbReference type="Reactome" id="R-HSA-114608">
    <property type="pathway name" value="Platelet degranulation"/>
</dbReference>
<dbReference type="SignaLink" id="Q16610"/>
<dbReference type="SIGNOR" id="Q16610"/>
<dbReference type="BioGRID-ORCS" id="1893">
    <property type="hits" value="8 hits in 1158 CRISPR screens"/>
</dbReference>
<dbReference type="ChiTaRS" id="ECM1">
    <property type="organism name" value="human"/>
</dbReference>
<dbReference type="GeneWiki" id="ECM1"/>
<dbReference type="GenomeRNAi" id="1893"/>
<dbReference type="Pharos" id="Q16610">
    <property type="development level" value="Tbio"/>
</dbReference>
<dbReference type="PRO" id="PR:Q16610"/>
<dbReference type="Proteomes" id="UP000005640">
    <property type="component" value="Chromosome 1"/>
</dbReference>
<dbReference type="RNAct" id="Q16610">
    <property type="molecule type" value="protein"/>
</dbReference>
<dbReference type="Bgee" id="ENSG00000143369">
    <property type="expression patterns" value="Expressed in lower esophagus mucosa and 178 other cell types or tissues"/>
</dbReference>
<dbReference type="ExpressionAtlas" id="Q16610">
    <property type="expression patterns" value="baseline and differential"/>
</dbReference>
<dbReference type="GO" id="GO:0062023">
    <property type="term" value="C:collagen-containing extracellular matrix"/>
    <property type="evidence" value="ECO:0000314"/>
    <property type="project" value="UniProtKB"/>
</dbReference>
<dbReference type="GO" id="GO:0070062">
    <property type="term" value="C:extracellular exosome"/>
    <property type="evidence" value="ECO:0007005"/>
    <property type="project" value="UniProtKB"/>
</dbReference>
<dbReference type="GO" id="GO:0031012">
    <property type="term" value="C:extracellular matrix"/>
    <property type="evidence" value="ECO:0000304"/>
    <property type="project" value="ProtInc"/>
</dbReference>
<dbReference type="GO" id="GO:0005576">
    <property type="term" value="C:extracellular region"/>
    <property type="evidence" value="ECO:0000304"/>
    <property type="project" value="Reactome"/>
</dbReference>
<dbReference type="GO" id="GO:0005615">
    <property type="term" value="C:extracellular space"/>
    <property type="evidence" value="ECO:0000318"/>
    <property type="project" value="GO_Central"/>
</dbReference>
<dbReference type="GO" id="GO:0031089">
    <property type="term" value="C:platelet dense granule lumen"/>
    <property type="evidence" value="ECO:0000304"/>
    <property type="project" value="Reactome"/>
</dbReference>
<dbReference type="GO" id="GO:0005134">
    <property type="term" value="F:interleukin-2 receptor binding"/>
    <property type="evidence" value="ECO:0007669"/>
    <property type="project" value="Ensembl"/>
</dbReference>
<dbReference type="GO" id="GO:0002020">
    <property type="term" value="F:protease binding"/>
    <property type="evidence" value="ECO:0000353"/>
    <property type="project" value="UniProtKB"/>
</dbReference>
<dbReference type="GO" id="GO:0001525">
    <property type="term" value="P:angiogenesis"/>
    <property type="evidence" value="ECO:0007669"/>
    <property type="project" value="UniProtKB-KW"/>
</dbReference>
<dbReference type="GO" id="GO:0031214">
    <property type="term" value="P:biomineral tissue development"/>
    <property type="evidence" value="ECO:0007669"/>
    <property type="project" value="UniProtKB-KW"/>
</dbReference>
<dbReference type="GO" id="GO:0002063">
    <property type="term" value="P:chondrocyte development"/>
    <property type="evidence" value="ECO:0007669"/>
    <property type="project" value="Ensembl"/>
</dbReference>
<dbReference type="GO" id="GO:0003416">
    <property type="term" value="P:endochondral bone growth"/>
    <property type="evidence" value="ECO:0007669"/>
    <property type="project" value="Ensembl"/>
</dbReference>
<dbReference type="GO" id="GO:0006954">
    <property type="term" value="P:inflammatory response"/>
    <property type="evidence" value="ECO:0007669"/>
    <property type="project" value="Ensembl"/>
</dbReference>
<dbReference type="GO" id="GO:0030502">
    <property type="term" value="P:negative regulation of bone mineralization"/>
    <property type="evidence" value="ECO:0000314"/>
    <property type="project" value="UniProtKB"/>
</dbReference>
<dbReference type="GO" id="GO:0001960">
    <property type="term" value="P:negative regulation of cytokine-mediated signaling pathway"/>
    <property type="evidence" value="ECO:0007669"/>
    <property type="project" value="Ensembl"/>
</dbReference>
<dbReference type="GO" id="GO:0010466">
    <property type="term" value="P:negative regulation of peptidase activity"/>
    <property type="evidence" value="ECO:0000314"/>
    <property type="project" value="UniProtKB"/>
</dbReference>
<dbReference type="GO" id="GO:0001503">
    <property type="term" value="P:ossification"/>
    <property type="evidence" value="ECO:0007669"/>
    <property type="project" value="UniProtKB-KW"/>
</dbReference>
<dbReference type="GO" id="GO:0045766">
    <property type="term" value="P:positive regulation of angiogenesis"/>
    <property type="evidence" value="ECO:0000314"/>
    <property type="project" value="UniProtKB"/>
</dbReference>
<dbReference type="GO" id="GO:0043123">
    <property type="term" value="P:positive regulation of canonical NF-kappaB signal transduction"/>
    <property type="evidence" value="ECO:0007001"/>
    <property type="project" value="UniProtKB"/>
</dbReference>
<dbReference type="GO" id="GO:0001938">
    <property type="term" value="P:positive regulation of endothelial cell proliferation"/>
    <property type="evidence" value="ECO:0000314"/>
    <property type="project" value="UniProtKB"/>
</dbReference>
<dbReference type="GO" id="GO:0030500">
    <property type="term" value="P:regulation of bone mineralization"/>
    <property type="evidence" value="ECO:0000318"/>
    <property type="project" value="GO_Central"/>
</dbReference>
<dbReference type="GO" id="GO:2000404">
    <property type="term" value="P:regulation of T cell migration"/>
    <property type="evidence" value="ECO:0007669"/>
    <property type="project" value="Ensembl"/>
</dbReference>
<dbReference type="GO" id="GO:0006357">
    <property type="term" value="P:regulation of transcription by RNA polymerase II"/>
    <property type="evidence" value="ECO:0007669"/>
    <property type="project" value="Ensembl"/>
</dbReference>
<dbReference type="GO" id="GO:0002828">
    <property type="term" value="P:regulation of type 2 immune response"/>
    <property type="evidence" value="ECO:0007669"/>
    <property type="project" value="Ensembl"/>
</dbReference>
<dbReference type="GO" id="GO:0007165">
    <property type="term" value="P:signal transduction"/>
    <property type="evidence" value="ECO:0007669"/>
    <property type="project" value="InterPro"/>
</dbReference>
<dbReference type="FunFam" id="1.10.246.10:FF:000006">
    <property type="entry name" value="Extracellular matrix protein 1"/>
    <property type="match status" value="1"/>
</dbReference>
<dbReference type="Gene3D" id="1.10.246.10">
    <property type="match status" value="3"/>
</dbReference>
<dbReference type="InterPro" id="IPR008605">
    <property type="entry name" value="ECM1"/>
</dbReference>
<dbReference type="InterPro" id="IPR020858">
    <property type="entry name" value="Serum_albumin-like"/>
</dbReference>
<dbReference type="PANTHER" id="PTHR16776">
    <property type="entry name" value="EXTRACELLULAR MATRIX PROTEIN 1"/>
    <property type="match status" value="1"/>
</dbReference>
<dbReference type="PANTHER" id="PTHR16776:SF3">
    <property type="entry name" value="EXTRACELLULAR MATRIX PROTEIN 1"/>
    <property type="match status" value="1"/>
</dbReference>
<dbReference type="Pfam" id="PF05782">
    <property type="entry name" value="ECM1"/>
    <property type="match status" value="1"/>
</dbReference>
<dbReference type="SUPFAM" id="SSF48552">
    <property type="entry name" value="Serum albumin-like"/>
    <property type="match status" value="2"/>
</dbReference>
<comment type="function">
    <text evidence="4 5 12">Involved in endochondral bone formation as negative regulator of bone mineralization. Stimulates the proliferation of endothelial cells and promotes angiogenesis. Inhibits MMP9 proteolytic activity.</text>
</comment>
<comment type="subunit">
    <text evidence="8 12 14">Interacts (via C-terminus) with HSPG2 (via C-terminus). Interacts with EFEMP1/FBLN3 and LAMB3. Interacts with MMP9.</text>
</comment>
<comment type="interaction">
    <interactant intactId="EBI-947964">
        <id>Q16610</id>
    </interactant>
    <interactant intactId="EBI-2809489">
        <id>Q9NQ94</id>
        <label>A1CF</label>
    </interactant>
    <organismsDiffer>false</organismsDiffer>
    <experiments>3</experiments>
</comment>
<comment type="interaction">
    <interactant intactId="EBI-947964">
        <id>Q16610</id>
    </interactant>
    <interactant intactId="EBI-2880652">
        <id>Q08043</id>
        <label>ACTN3</label>
    </interactant>
    <organismsDiffer>false</organismsDiffer>
    <experiments>3</experiments>
</comment>
<comment type="interaction">
    <interactant intactId="EBI-947964">
        <id>Q16610</id>
    </interactant>
    <interactant intactId="EBI-8643161">
        <id>Q9NX04</id>
        <label>AIRIM</label>
    </interactant>
    <organismsDiffer>false</organismsDiffer>
    <experiments>3</experiments>
</comment>
<comment type="interaction">
    <interactant intactId="EBI-947964">
        <id>Q16610</id>
    </interactant>
    <interactant intactId="EBI-1050106">
        <id>O75934</id>
        <label>BCAS2</label>
    </interactant>
    <organismsDiffer>false</organismsDiffer>
    <experiments>3</experiments>
</comment>
<comment type="interaction">
    <interactant intactId="EBI-947964">
        <id>Q16610</id>
    </interactant>
    <interactant intactId="EBI-3867333">
        <id>A8MQ03</id>
        <label>CYSRT1</label>
    </interactant>
    <organismsDiffer>false</organismsDiffer>
    <experiments>3</experiments>
</comment>
<comment type="interaction">
    <interactant intactId="EBI-947964">
        <id>Q16610</id>
    </interactant>
    <interactant intactId="EBI-740376">
        <id>Q86UW9</id>
        <label>DTX2</label>
    </interactant>
    <organismsDiffer>false</organismsDiffer>
    <experiments>3</experiments>
</comment>
<comment type="interaction">
    <interactant intactId="EBI-947964">
        <id>Q16610</id>
    </interactant>
    <interactant intactId="EBI-744099">
        <id>Q9H0I2</id>
        <label>ENKD1</label>
    </interactant>
    <organismsDiffer>false</organismsDiffer>
    <experiments>3</experiments>
</comment>
<comment type="interaction">
    <interactant intactId="EBI-947964">
        <id>Q16610</id>
    </interactant>
    <interactant intactId="EBI-495538">
        <id>P48023</id>
        <label>FASLG</label>
    </interactant>
    <organismsDiffer>false</organismsDiffer>
    <experiments>3</experiments>
</comment>
<comment type="interaction">
    <interactant intactId="EBI-947964">
        <id>Q16610</id>
    </interactant>
    <interactant intactId="EBI-744771">
        <id>O75344</id>
        <label>FKBP6</label>
    </interactant>
    <organismsDiffer>false</organismsDiffer>
    <experiments>3</experiments>
</comment>
<comment type="interaction">
    <interactant intactId="EBI-947964">
        <id>Q16610</id>
    </interactant>
    <interactant intactId="EBI-725515">
        <id>O43559</id>
        <label>FRS3</label>
    </interactant>
    <organismsDiffer>false</organismsDiffer>
    <experiments>3</experiments>
</comment>
<comment type="interaction">
    <interactant intactId="EBI-947964">
        <id>Q16610</id>
    </interactant>
    <interactant intactId="EBI-10188645">
        <id>O75603</id>
        <label>GCM2</label>
    </interactant>
    <organismsDiffer>false</organismsDiffer>
    <experiments>3</experiments>
</comment>
<comment type="interaction">
    <interactant intactId="EBI-947964">
        <id>Q16610</id>
    </interactant>
    <interactant intactId="EBI-11975289">
        <id>Q9Y223-2</id>
        <label>GNE</label>
    </interactant>
    <organismsDiffer>false</organismsDiffer>
    <experiments>3</experiments>
</comment>
<comment type="interaction">
    <interactant intactId="EBI-947964">
        <id>Q16610</id>
    </interactant>
    <interactant intactId="EBI-751540">
        <id>O95872</id>
        <label>GPANK1</label>
    </interactant>
    <organismsDiffer>false</organismsDiffer>
    <experiments>3</experiments>
</comment>
<comment type="interaction">
    <interactant intactId="EBI-947964">
        <id>Q16610</id>
    </interactant>
    <interactant intactId="EBI-747754">
        <id>P28799</id>
        <label>GRN</label>
    </interactant>
    <organismsDiffer>false</organismsDiffer>
    <experiments>3</experiments>
</comment>
<comment type="interaction">
    <interactant intactId="EBI-947964">
        <id>Q16610</id>
    </interactant>
    <interactant intactId="EBI-1752118">
        <id>P31273</id>
        <label>HOXC8</label>
    </interactant>
    <organismsDiffer>false</organismsDiffer>
    <experiments>3</experiments>
</comment>
<comment type="interaction">
    <interactant intactId="EBI-947964">
        <id>Q16610</id>
    </interactant>
    <interactant intactId="EBI-11051601">
        <id>P16144-2</id>
        <label>ITGB4</label>
    </interactant>
    <organismsDiffer>false</organismsDiffer>
    <experiments>3</experiments>
</comment>
<comment type="interaction">
    <interactant intactId="EBI-947964">
        <id>Q16610</id>
    </interactant>
    <interactant intactId="EBI-6426443">
        <id>Q2WGJ6</id>
        <label>KLHL38</label>
    </interactant>
    <organismsDiffer>false</organismsDiffer>
    <experiments>3</experiments>
</comment>
<comment type="interaction">
    <interactant intactId="EBI-947964">
        <id>Q16610</id>
    </interactant>
    <interactant intactId="EBI-11974251">
        <id>Q6L8H2</id>
        <label>KRTAP5-3</label>
    </interactant>
    <organismsDiffer>false</organismsDiffer>
    <experiments>3</experiments>
</comment>
<comment type="interaction">
    <interactant intactId="EBI-947964">
        <id>Q16610</id>
    </interactant>
    <interactant intactId="EBI-1043191">
        <id>Q9BYQ3</id>
        <label>KRTAP9-3</label>
    </interactant>
    <organismsDiffer>false</organismsDiffer>
    <experiments>3</experiments>
</comment>
<comment type="interaction">
    <interactant intactId="EBI-947964">
        <id>Q16610</id>
    </interactant>
    <interactant intactId="EBI-10246607">
        <id>Q5TA79</id>
        <label>LCE2A</label>
    </interactant>
    <organismsDiffer>false</organismsDiffer>
    <experiments>3</experiments>
</comment>
<comment type="interaction">
    <interactant intactId="EBI-947964">
        <id>Q16610</id>
    </interactant>
    <interactant intactId="EBI-2513988">
        <id>O14910</id>
        <label>LIN7A</label>
    </interactant>
    <organismsDiffer>false</organismsDiffer>
    <experiments>3</experiments>
</comment>
<comment type="interaction">
    <interactant intactId="EBI-947964">
        <id>Q16610</id>
    </interactant>
    <interactant intactId="EBI-2798728">
        <id>P61968</id>
        <label>LMO4</label>
    </interactant>
    <organismsDiffer>false</organismsDiffer>
    <experiments>3</experiments>
</comment>
<comment type="interaction">
    <interactant intactId="EBI-947964">
        <id>Q16610</id>
    </interactant>
    <interactant intactId="EBI-2340269">
        <id>Q13064</id>
        <label>MKRN3</label>
    </interactant>
    <organismsDiffer>false</organismsDiffer>
    <experiments>3</experiments>
</comment>
<comment type="interaction">
    <interactant intactId="EBI-947964">
        <id>Q16610</id>
    </interactant>
    <interactant intactId="EBI-2930670">
        <id>P31323</id>
        <label>PRKAR2B</label>
    </interactant>
    <organismsDiffer>false</organismsDiffer>
    <experiments>3</experiments>
</comment>
<comment type="interaction">
    <interactant intactId="EBI-947964">
        <id>Q16610</id>
    </interactant>
    <interactant intactId="EBI-14067109">
        <id>Q96NU1</id>
        <label>SAMD11</label>
    </interactant>
    <organismsDiffer>false</organismsDiffer>
    <experiments>3</experiments>
</comment>
<comment type="interaction">
    <interactant intactId="EBI-947964">
        <id>Q16610</id>
    </interactant>
    <interactant intactId="EBI-744081">
        <id>Q96EQ0</id>
        <label>SGTB</label>
    </interactant>
    <organismsDiffer>false</organismsDiffer>
    <experiments>3</experiments>
</comment>
<comment type="interaction">
    <interactant intactId="EBI-947964">
        <id>Q16610</id>
    </interactant>
    <interactant intactId="EBI-766589">
        <id>P09234</id>
        <label>SNRPC</label>
    </interactant>
    <organismsDiffer>false</organismsDiffer>
    <experiments>3</experiments>
</comment>
<comment type="interaction">
    <interactant intactId="EBI-947964">
        <id>Q16610</id>
    </interactant>
    <interactant intactId="EBI-741480">
        <id>Q9UMX0</id>
        <label>UBQLN1</label>
    </interactant>
    <organismsDiffer>false</organismsDiffer>
    <experiments>3</experiments>
</comment>
<comment type="interaction">
    <interactant intactId="EBI-947964">
        <id>Q16610</id>
    </interactant>
    <interactant intactId="EBI-947187">
        <id>Q9UHD9</id>
        <label>UBQLN2</label>
    </interactant>
    <organismsDiffer>false</organismsDiffer>
    <experiments>3</experiments>
</comment>
<comment type="subcellular location">
    <subcellularLocation>
        <location>Secreted</location>
        <location>Extracellular space</location>
        <location>Extracellular matrix</location>
    </subcellularLocation>
</comment>
<comment type="alternative products">
    <event type="alternative splicing"/>
    <isoform>
        <id>Q16610-1</id>
        <name>1</name>
        <name>1a</name>
        <sequence type="displayed"/>
    </isoform>
    <isoform>
        <id>Q16610-2</id>
        <name>2</name>
        <name>1b</name>
        <sequence type="described" ref="VSP_036414"/>
    </isoform>
    <isoform>
        <id>Q16610-3</id>
        <name>3</name>
        <sequence type="described" ref="VSP_036411 VSP_036412 VSP_036415 VSP_036416"/>
    </isoform>
    <isoform>
        <id>Q16610-4</id>
        <name>4</name>
        <sequence type="described" ref="VSP_036413"/>
    </isoform>
</comment>
<comment type="tissue specificity">
    <text evidence="5 8">Expressed in breast cancer tissues. Little or no expression observed in normal breast tissues. Expressed in skin; wide expression is observed throughout the dermis with minimal expression in the epidermis.</text>
</comment>
<comment type="disease" evidence="6 7">
    <disease id="DI-01909">
        <name>Lipoid proteinosis</name>
        <acronym>LiP</acronym>
        <description>Rare autosomal recessive disorder characterized by generalized thickening of skin, mucosae and certain viscera. Classical features include beaded eyelid papules and laryngeal infiltration leading to hoarseness. Histologically, there is widespread deposition of hyaline material and disruption/reduplication of basement membrane.</description>
        <dbReference type="MIM" id="247100"/>
    </disease>
    <text>The disease is caused by variants affecting the gene represented in this entry.</text>
</comment>
<comment type="miscellaneous">
    <molecule>Isoform 4</molecule>
    <text evidence="18">May be due to intron retention.</text>
</comment>
<comment type="online information" name="Atlas of Genetics and Cytogenetics in Oncology and Haematology">
    <link uri="https://atlasgeneticsoncology.org/gene/40398/ECM1"/>
</comment>